<comment type="function">
    <text evidence="5 11">Involved in the control of reactive oxygen species levels and the regulation of mitochondrial redox homeostasis (PubMed:24601690). Maintains thioredoxin in a reduced state. May play a role in redox-regulated cell signaling.</text>
</comment>
<comment type="catalytic activity">
    <reaction evidence="4 5">
        <text>[thioredoxin]-dithiol + NADP(+) = [thioredoxin]-disulfide + NADPH + H(+)</text>
        <dbReference type="Rhea" id="RHEA:20345"/>
        <dbReference type="Rhea" id="RHEA-COMP:10698"/>
        <dbReference type="Rhea" id="RHEA-COMP:10700"/>
        <dbReference type="ChEBI" id="CHEBI:15378"/>
        <dbReference type="ChEBI" id="CHEBI:29950"/>
        <dbReference type="ChEBI" id="CHEBI:50058"/>
        <dbReference type="ChEBI" id="CHEBI:57783"/>
        <dbReference type="ChEBI" id="CHEBI:58349"/>
        <dbReference type="EC" id="1.8.1.9"/>
    </reaction>
    <physiologicalReaction direction="right-to-left" evidence="4 5">
        <dbReference type="Rhea" id="RHEA:20347"/>
    </physiologicalReaction>
</comment>
<comment type="cofactor">
    <cofactor evidence="7 16">
        <name>FAD</name>
        <dbReference type="ChEBI" id="CHEBI:57692"/>
    </cofactor>
</comment>
<comment type="subunit">
    <text evidence="2">Homodimer.</text>
</comment>
<comment type="subcellular location">
    <subcellularLocation>
        <location evidence="8">Mitochondrion</location>
    </subcellularLocation>
</comment>
<comment type="alternative products">
    <event type="alternative splicing"/>
    <isoform>
        <id>Q9NNW7-1</id>
        <name>1</name>
        <name evidence="16">Alpha</name>
        <sequence type="displayed"/>
    </isoform>
    <isoform>
        <id>Q9NNW7-2</id>
        <name>2</name>
        <name evidence="16">Beta</name>
        <sequence type="described" ref="VSP_008304"/>
    </isoform>
    <isoform>
        <id>Q9NNW7-3</id>
        <name>3</name>
        <name>SelZf2</name>
        <sequence type="described" ref="VSP_008305"/>
    </isoform>
    <isoform>
        <id>Q9NNW7-4</id>
        <name>4</name>
        <name>SelZf1</name>
        <sequence type="described" ref="VSP_008306"/>
    </isoform>
</comment>
<comment type="tissue specificity">
    <text evidence="8 9 11 12">Highly expressed in the prostate, ovary, liver, testis, uterus, colon and small intestine. Intermediate levels in brain, skeletal muscle, heart and spleen. Low levels in placenta, pancreas, thymus and peripheral blood leukocytes. According to PubMed:10608886, high levels in kidney, whereas according to PubMed:9923614, levels are low. High expression is observed in the adrenal cortex (PubMed:24601690).</text>
</comment>
<comment type="disease" evidence="11">
    <disease id="DI-05165">
        <name>Glucocorticoid deficiency 5</name>
        <acronym>GCCD5</acronym>
        <description>A form of glucocorticoid deficiency, a rare autosomal recessive disorder characterized by resistance to ACTH action on the adrenal cortex, adrenal insufficiency and an inability of the adrenal cortex to produce cortisol. It usually presents in the neonatal period or in early childhood with episodes of hypoglycemia and other symptoms related to cortisol deficiency, including failure to thrive, recurrent illnesses or infections, convulsions, and shock. In a small number of patients hypoglycemia can be sufficiently severe and persistent that it leads to serious long-term neurological damage or death. The diagnosis is readily confirmed with a low plasma cortisol measurement in the presence of an elevated ACTH level, and normal aldosterone and plasma renin measurements.</description>
        <dbReference type="MIM" id="617825"/>
    </disease>
    <text>The disease may be caused by variants affecting the gene represented in this entry.</text>
</comment>
<comment type="miscellaneous">
    <text evidence="1">The active site is a redox-active disulfide bond. The selenocysteine residue is essential for enzymatic activity (By similarity).</text>
</comment>
<comment type="similarity">
    <text evidence="16">Belongs to the class-I pyridine nucleotide-disulfide oxidoreductase family.</text>
</comment>
<comment type="sequence caution" evidence="16">
    <conflict type="erroneous initiation">
        <sequence resource="EMBL-CDS" id="AAD25167"/>
    </conflict>
    <text>Truncated N-terminus.</text>
</comment>
<comment type="sequence caution" evidence="16">
    <conflict type="erroneous termination">
        <sequence resource="EMBL-CDS" id="AAG47635"/>
    </conflict>
    <text>Truncated C-terminus.</text>
</comment>
<dbReference type="EC" id="1.8.1.9" evidence="4 5"/>
<dbReference type="EMBL" id="AF171054">
    <property type="protein sequence ID" value="AAD51324.1"/>
    <property type="molecule type" value="mRNA"/>
</dbReference>
<dbReference type="EMBL" id="AF106697">
    <property type="protein sequence ID" value="AAD19597.1"/>
    <property type="molecule type" value="mRNA"/>
</dbReference>
<dbReference type="EMBL" id="AF044212">
    <property type="protein sequence ID" value="AAD25167.1"/>
    <property type="status" value="ALT_INIT"/>
    <property type="molecule type" value="mRNA"/>
</dbReference>
<dbReference type="EMBL" id="AB019694">
    <property type="protein sequence ID" value="BAA77601.2"/>
    <property type="molecule type" value="mRNA"/>
</dbReference>
<dbReference type="EMBL" id="AB019695">
    <property type="protein sequence ID" value="BAA77602.2"/>
    <property type="molecule type" value="mRNA"/>
</dbReference>
<dbReference type="EMBL" id="AF166126">
    <property type="protein sequence ID" value="AAF21431.1"/>
    <property type="molecule type" value="mRNA"/>
</dbReference>
<dbReference type="EMBL" id="AF166127">
    <property type="protein sequence ID" value="AAF21432.1"/>
    <property type="molecule type" value="mRNA"/>
</dbReference>
<dbReference type="EMBL" id="AF201385">
    <property type="protein sequence ID" value="AAG47635.1"/>
    <property type="status" value="ALT_SEQ"/>
    <property type="molecule type" value="mRNA"/>
</dbReference>
<dbReference type="EMBL" id="AC000078">
    <property type="status" value="NOT_ANNOTATED_CDS"/>
    <property type="molecule type" value="Genomic_DNA"/>
</dbReference>
<dbReference type="EMBL" id="AC000080">
    <property type="status" value="NOT_ANNOTATED_CDS"/>
    <property type="molecule type" value="Genomic_DNA"/>
</dbReference>
<dbReference type="EMBL" id="AC000090">
    <property type="status" value="NOT_ANNOTATED_CDS"/>
    <property type="molecule type" value="Genomic_DNA"/>
</dbReference>
<dbReference type="EMBL" id="BC007489">
    <property type="protein sequence ID" value="AAH07489.3"/>
    <property type="molecule type" value="mRNA"/>
</dbReference>
<dbReference type="CCDS" id="CCDS42981.1">
    <molecule id="Q9NNW7-1"/>
</dbReference>
<dbReference type="CCDS" id="CCDS86998.1">
    <molecule id="Q9NNW7-3"/>
</dbReference>
<dbReference type="RefSeq" id="NP_001339231.1">
    <molecule id="Q9NNW7-3"/>
    <property type="nucleotide sequence ID" value="NM_001352302.2"/>
</dbReference>
<dbReference type="RefSeq" id="NP_006431.2">
    <molecule id="Q9NNW7-1"/>
    <property type="nucleotide sequence ID" value="NM_006440.4"/>
</dbReference>
<dbReference type="BioGRID" id="115836">
    <property type="interactions" value="61"/>
</dbReference>
<dbReference type="FunCoup" id="Q9NNW7">
    <property type="interactions" value="1024"/>
</dbReference>
<dbReference type="IntAct" id="Q9NNW7">
    <property type="interactions" value="13"/>
</dbReference>
<dbReference type="MINT" id="Q9NNW7"/>
<dbReference type="STRING" id="9606.ENSP00000383365"/>
<dbReference type="BindingDB" id="Q9NNW7"/>
<dbReference type="ChEMBL" id="CHEMBL2403"/>
<dbReference type="DrugBank" id="DB05428">
    <property type="generic name" value="Motexafin gadolinium"/>
</dbReference>
<dbReference type="GlyGen" id="Q9NNW7">
    <property type="glycosylation" value="1 site, 1 O-linked glycan (1 site)"/>
</dbReference>
<dbReference type="iPTMnet" id="Q9NNW7"/>
<dbReference type="PhosphoSitePlus" id="Q9NNW7"/>
<dbReference type="SwissPalm" id="Q9NNW7"/>
<dbReference type="BioMuta" id="TXNRD2"/>
<dbReference type="DMDM" id="182705230"/>
<dbReference type="jPOST" id="Q9NNW7"/>
<dbReference type="MassIVE" id="Q9NNW7"/>
<dbReference type="PaxDb" id="9606-ENSP00000383365"/>
<dbReference type="PeptideAtlas" id="Q9NNW7"/>
<dbReference type="ProteomicsDB" id="81857">
    <molecule id="Q9NNW7-1"/>
</dbReference>
<dbReference type="ProteomicsDB" id="81858">
    <molecule id="Q9NNW7-2"/>
</dbReference>
<dbReference type="ProteomicsDB" id="81859">
    <molecule id="Q9NNW7-3"/>
</dbReference>
<dbReference type="ProteomicsDB" id="81860">
    <molecule id="Q9NNW7-4"/>
</dbReference>
<dbReference type="Pumba" id="Q9NNW7"/>
<dbReference type="Antibodypedia" id="230">
    <property type="antibodies" value="265 antibodies from 34 providers"/>
</dbReference>
<dbReference type="DNASU" id="10587"/>
<dbReference type="Ensembl" id="ENST00000400521.7">
    <molecule id="Q9NNW7-1"/>
    <property type="protein sequence ID" value="ENSP00000383365.1"/>
    <property type="gene ID" value="ENSG00000184470.21"/>
</dbReference>
<dbReference type="Ensembl" id="ENST00000542719.6">
    <molecule id="Q9NNW7-3"/>
    <property type="protein sequence ID" value="ENSP00000485128.2"/>
    <property type="gene ID" value="ENSG00000184470.21"/>
</dbReference>
<dbReference type="GeneID" id="10587"/>
<dbReference type="KEGG" id="hsa:10587"/>
<dbReference type="MANE-Select" id="ENST00000400521.7">
    <property type="protein sequence ID" value="ENSP00000383365.1"/>
    <property type="RefSeq nucleotide sequence ID" value="NM_006440.5"/>
    <property type="RefSeq protein sequence ID" value="NP_006431.2"/>
</dbReference>
<dbReference type="AGR" id="HGNC:18155"/>
<dbReference type="CTD" id="10587"/>
<dbReference type="DisGeNET" id="10587"/>
<dbReference type="GeneCards" id="TXNRD2"/>
<dbReference type="HGNC" id="HGNC:18155">
    <property type="gene designation" value="TXNRD2"/>
</dbReference>
<dbReference type="HPA" id="ENSG00000184470">
    <property type="expression patterns" value="Low tissue specificity"/>
</dbReference>
<dbReference type="MalaCards" id="TXNRD2"/>
<dbReference type="MIM" id="606448">
    <property type="type" value="gene"/>
</dbReference>
<dbReference type="MIM" id="617825">
    <property type="type" value="phenotype"/>
</dbReference>
<dbReference type="neXtProt" id="NX_Q9NNW7"/>
<dbReference type="OpenTargets" id="ENSG00000184470"/>
<dbReference type="Orphanet" id="361">
    <property type="disease" value="Familial glucocorticoid deficiency"/>
</dbReference>
<dbReference type="Orphanet" id="154">
    <property type="disease" value="Familial isolated dilated cardiomyopathy"/>
</dbReference>
<dbReference type="PharmGKB" id="PA38302"/>
<dbReference type="VEuPathDB" id="HostDB:ENSG00000184470"/>
<dbReference type="eggNOG" id="KOG4716">
    <property type="taxonomic scope" value="Eukaryota"/>
</dbReference>
<dbReference type="GeneTree" id="ENSGT00940000158832"/>
<dbReference type="InParanoid" id="Q9NNW7"/>
<dbReference type="OMA" id="CFDYVKP"/>
<dbReference type="OrthoDB" id="5956163at2759"/>
<dbReference type="PAN-GO" id="Q9NNW7">
    <property type="GO annotations" value="5 GO annotations based on evolutionary models"/>
</dbReference>
<dbReference type="PhylomeDB" id="Q9NNW7"/>
<dbReference type="TreeFam" id="TF314782"/>
<dbReference type="BRENDA" id="1.8.1.9">
    <property type="organism ID" value="2681"/>
</dbReference>
<dbReference type="PathwayCommons" id="Q9NNW7"/>
<dbReference type="Reactome" id="R-HSA-3299685">
    <property type="pathway name" value="Detoxification of Reactive Oxygen Species"/>
</dbReference>
<dbReference type="SignaLink" id="Q9NNW7"/>
<dbReference type="BioGRID-ORCS" id="10587">
    <property type="hits" value="29 hits in 1167 CRISPR screens"/>
</dbReference>
<dbReference type="ChiTaRS" id="TXNRD2">
    <property type="organism name" value="human"/>
</dbReference>
<dbReference type="GenomeRNAi" id="10587"/>
<dbReference type="Pharos" id="Q9NNW7">
    <property type="development level" value="Tbio"/>
</dbReference>
<dbReference type="PRO" id="PR:Q9NNW7"/>
<dbReference type="Proteomes" id="UP000005640">
    <property type="component" value="Chromosome 22"/>
</dbReference>
<dbReference type="RNAct" id="Q9NNW7">
    <property type="molecule type" value="protein"/>
</dbReference>
<dbReference type="Bgee" id="ENSG00000184470">
    <property type="expression patterns" value="Expressed in right lobe of liver and 188 other cell types or tissues"/>
</dbReference>
<dbReference type="ExpressionAtlas" id="Q9NNW7">
    <property type="expression patterns" value="baseline and differential"/>
</dbReference>
<dbReference type="GO" id="GO:0030424">
    <property type="term" value="C:axon"/>
    <property type="evidence" value="ECO:0007669"/>
    <property type="project" value="Ensembl"/>
</dbReference>
<dbReference type="GO" id="GO:0005737">
    <property type="term" value="C:cytoplasm"/>
    <property type="evidence" value="ECO:0000318"/>
    <property type="project" value="GO_Central"/>
</dbReference>
<dbReference type="GO" id="GO:0005829">
    <property type="term" value="C:cytosol"/>
    <property type="evidence" value="ECO:0000314"/>
    <property type="project" value="HPA"/>
</dbReference>
<dbReference type="GO" id="GO:0030425">
    <property type="term" value="C:dendrite"/>
    <property type="evidence" value="ECO:0007669"/>
    <property type="project" value="Ensembl"/>
</dbReference>
<dbReference type="GO" id="GO:0005759">
    <property type="term" value="C:mitochondrial matrix"/>
    <property type="evidence" value="ECO:0000304"/>
    <property type="project" value="Reactome"/>
</dbReference>
<dbReference type="GO" id="GO:0005739">
    <property type="term" value="C:mitochondrion"/>
    <property type="evidence" value="ECO:0000314"/>
    <property type="project" value="HPA"/>
</dbReference>
<dbReference type="GO" id="GO:0043025">
    <property type="term" value="C:neuronal cell body"/>
    <property type="evidence" value="ECO:0007669"/>
    <property type="project" value="Ensembl"/>
</dbReference>
<dbReference type="GO" id="GO:0050660">
    <property type="term" value="F:flavin adenine dinucleotide binding"/>
    <property type="evidence" value="ECO:0007669"/>
    <property type="project" value="InterPro"/>
</dbReference>
<dbReference type="GO" id="GO:0042803">
    <property type="term" value="F:protein homodimerization activity"/>
    <property type="evidence" value="ECO:0000250"/>
    <property type="project" value="UniProtKB"/>
</dbReference>
<dbReference type="GO" id="GO:0044877">
    <property type="term" value="F:protein-containing complex binding"/>
    <property type="evidence" value="ECO:0007669"/>
    <property type="project" value="Ensembl"/>
</dbReference>
<dbReference type="GO" id="GO:0004791">
    <property type="term" value="F:thioredoxin-disulfide reductase (NADPH) activity"/>
    <property type="evidence" value="ECO:0000250"/>
    <property type="project" value="UniProtKB"/>
</dbReference>
<dbReference type="GO" id="GO:0045454">
    <property type="term" value="P:cell redox homeostasis"/>
    <property type="evidence" value="ECO:0000315"/>
    <property type="project" value="UniProtKB"/>
</dbReference>
<dbReference type="GO" id="GO:0055093">
    <property type="term" value="P:response to hyperoxia"/>
    <property type="evidence" value="ECO:0007669"/>
    <property type="project" value="Ensembl"/>
</dbReference>
<dbReference type="GO" id="GO:0000305">
    <property type="term" value="P:response to oxygen radical"/>
    <property type="evidence" value="ECO:0000304"/>
    <property type="project" value="UniProtKB"/>
</dbReference>
<dbReference type="GO" id="GO:0010269">
    <property type="term" value="P:response to selenium ion"/>
    <property type="evidence" value="ECO:0007669"/>
    <property type="project" value="Ensembl"/>
</dbReference>
<dbReference type="GO" id="GO:0009410">
    <property type="term" value="P:response to xenobiotic stimulus"/>
    <property type="evidence" value="ECO:0007669"/>
    <property type="project" value="Ensembl"/>
</dbReference>
<dbReference type="FunFam" id="3.50.50.60:FF:000190">
    <property type="entry name" value="Thioredoxin reductase"/>
    <property type="match status" value="1"/>
</dbReference>
<dbReference type="FunFam" id="3.30.390.30:FF:000004">
    <property type="entry name" value="Thioredoxin reductase 1, cytoplasmic"/>
    <property type="match status" value="1"/>
</dbReference>
<dbReference type="Gene3D" id="3.30.390.30">
    <property type="match status" value="1"/>
</dbReference>
<dbReference type="Gene3D" id="3.50.50.60">
    <property type="entry name" value="FAD/NAD(P)-binding domain"/>
    <property type="match status" value="2"/>
</dbReference>
<dbReference type="InterPro" id="IPR036188">
    <property type="entry name" value="FAD/NAD-bd_sf"/>
</dbReference>
<dbReference type="InterPro" id="IPR023753">
    <property type="entry name" value="FAD/NAD-binding_dom"/>
</dbReference>
<dbReference type="InterPro" id="IPR016156">
    <property type="entry name" value="FAD/NAD-linked_Rdtase_dimer_sf"/>
</dbReference>
<dbReference type="InterPro" id="IPR046952">
    <property type="entry name" value="GSHR/TRXR-like"/>
</dbReference>
<dbReference type="InterPro" id="IPR001100">
    <property type="entry name" value="Pyr_nuc-diS_OxRdtase"/>
</dbReference>
<dbReference type="InterPro" id="IPR004099">
    <property type="entry name" value="Pyr_nucl-diS_OxRdtase_dimer"/>
</dbReference>
<dbReference type="InterPro" id="IPR012999">
    <property type="entry name" value="Pyr_OxRdtase_I_AS"/>
</dbReference>
<dbReference type="InterPro" id="IPR006338">
    <property type="entry name" value="Thioredoxin/glutathione_Rdtase"/>
</dbReference>
<dbReference type="NCBIfam" id="TIGR01438">
    <property type="entry name" value="TGR"/>
    <property type="match status" value="1"/>
</dbReference>
<dbReference type="PANTHER" id="PTHR42737">
    <property type="entry name" value="GLUTATHIONE REDUCTASE"/>
    <property type="match status" value="1"/>
</dbReference>
<dbReference type="PANTHER" id="PTHR42737:SF7">
    <property type="entry name" value="THIOREDOXIN-DISULFIDE REDUCTASE"/>
    <property type="match status" value="1"/>
</dbReference>
<dbReference type="Pfam" id="PF07992">
    <property type="entry name" value="Pyr_redox_2"/>
    <property type="match status" value="1"/>
</dbReference>
<dbReference type="Pfam" id="PF02852">
    <property type="entry name" value="Pyr_redox_dim"/>
    <property type="match status" value="1"/>
</dbReference>
<dbReference type="PIRSF" id="PIRSF000350">
    <property type="entry name" value="Mercury_reductase_MerA"/>
    <property type="match status" value="1"/>
</dbReference>
<dbReference type="PRINTS" id="PR00368">
    <property type="entry name" value="FADPNR"/>
</dbReference>
<dbReference type="PRINTS" id="PR00411">
    <property type="entry name" value="PNDRDTASEI"/>
</dbReference>
<dbReference type="SUPFAM" id="SSF51905">
    <property type="entry name" value="FAD/NAD(P)-binding domain"/>
    <property type="match status" value="1"/>
</dbReference>
<dbReference type="SUPFAM" id="SSF55424">
    <property type="entry name" value="FAD/NAD-linked reductases, dimerisation (C-terminal) domain"/>
    <property type="match status" value="1"/>
</dbReference>
<dbReference type="PROSITE" id="PS00076">
    <property type="entry name" value="PYRIDINE_REDOX_1"/>
    <property type="match status" value="1"/>
</dbReference>
<accession>Q9NNW7</accession>
<accession>O95840</accession>
<accession>Q96IJ2</accession>
<accession>Q9H2Z5</accession>
<accession>Q9NZV3</accession>
<accession>Q9NZV4</accession>
<accession>Q9P2Y0</accession>
<accession>Q9P2Y1</accession>
<accession>Q9UQU8</accession>
<name>TRXR2_HUMAN</name>
<sequence length="524" mass="56507">MAAMAVALRGLGGRFRWRTQAVAGGVRGAARGAAAGQRDYDLLVVGGGSGGLACAKEAAQLGRKVAVVDYVEPSPQGTRWGLGGTCVNVGCIPKKLMHQAALLGGLIQDAPNYGWEVAQPVPHDWRKMAEAVQNHVKSLNWGHRVQLQDRKVKYFNIKASFVDEHTVCGVAKGGKEILLSADHIIIATGGRPRYPTHIEGALEYGITSDDIFWLKESPGKTLVVGASYVALECAGFLTGIGLDTTIMMRSIPLRGFDQQMSSMVIEHMASHGTRFLRGCAPSRVRRLPDGQLQVTWEDSTTGKEDTGTFDTVLWAIGRVPDTRSLNLEKAGVDTSPDTQKILVDSREATSVPHIYAIGDVVEGRPELTPIAIMAGRLLVQRLFGGSSDLMDYDNVPTTVFTPLEYGCVGLSEEEAVARHGQEHVEVYHAHYKPLEFTVAGRDASQCYVKMVCLREPPQLVLGLHFLGPNAGEVTQGFALGIKCGASYAQVMRTVGIHPTCSEEVVKLRISKRSGLDPTVTGCUG</sequence>
<reference evidence="16" key="1">
    <citation type="journal article" date="1999" name="J. Biol. Chem.">
        <title>Redox regulation of cell signaling by selenocysteine in mammalian thioredoxin reductases.</title>
        <authorList>
            <person name="Sun Q.-A."/>
            <person name="Wu Y."/>
            <person name="Zappacosta F."/>
            <person name="Jeang K.-T."/>
            <person name="Lee B.J."/>
            <person name="Hatfield D.L."/>
            <person name="Gladyshev V.N."/>
        </authorList>
    </citation>
    <scope>NUCLEOTIDE SEQUENCE [MRNA] (ISOFORM 1)</scope>
</reference>
<reference evidence="16" key="2">
    <citation type="journal article" date="1999" name="FEBS Lett.">
        <title>Cloning, sequencing and functional expression of a novel human thioredoxin reductase.</title>
        <authorList>
            <person name="Gasdaska P.Y."/>
            <person name="Berggren M.M."/>
            <person name="Berry M.J."/>
            <person name="Powis G."/>
        </authorList>
    </citation>
    <scope>NUCLEOTIDE SEQUENCE [MRNA] (ISOFORM 1)</scope>
    <scope>TISSUE SPECIFICITY</scope>
    <scope>VARIANT SER-66</scope>
    <source>
        <tissue>Fetal heart</tissue>
        <tissue>Placenta</tissue>
    </source>
</reference>
<reference evidence="16" key="3">
    <citation type="journal article" date="1999" name="Eur. J. Biochem.">
        <title>Human mitochondrial thioredoxin reductase: cDNA cloning, expression and genomic organization.</title>
        <authorList>
            <person name="Miranda-Vizuete A."/>
            <person name="Damdimopoulos A.E."/>
            <person name="Pedrajas J.R."/>
            <person name="Gustafsson J.-A."/>
            <person name="Spyrou G."/>
        </authorList>
    </citation>
    <scope>NUCLEOTIDE SEQUENCE [MRNA] (ISOFORM 1)</scope>
    <scope>SUBCELLULAR LOCATION</scope>
    <scope>TISSUE SPECIFICITY</scope>
    <source>
        <tissue>Adrenal gland</tissue>
        <tissue>Testis</tissue>
    </source>
</reference>
<reference evidence="16" key="4">
    <citation type="submission" date="1998-11" db="EMBL/GenBank/DDBJ databases">
        <authorList>
            <person name="Toji S."/>
            <person name="Yano M."/>
            <person name="Tamai K."/>
        </authorList>
    </citation>
    <scope>NUCLEOTIDE SEQUENCE (ISOFORMS 1 AND 2)</scope>
    <scope>VARIANT THR-370</scope>
</reference>
<reference evidence="16" key="5">
    <citation type="journal article" date="1999" name="J. Biol. Chem.">
        <title>Novel selenoproteins identified in silico and in vivo by using a conserved RNA structural motif.</title>
        <authorList>
            <person name="Lescure A."/>
            <person name="Gautheret D."/>
            <person name="Carbon P."/>
            <person name="Krol A."/>
        </authorList>
    </citation>
    <scope>NUCLEOTIDE SEQUENCE [MRNA] (ISOFORMS 3 AND 4)</scope>
    <scope>ALTERNATIVE SPLICING</scope>
    <scope>TISSUE SPECIFICITY</scope>
    <scope>VARIANT THR-370</scope>
    <source>
        <tissue>Cervix carcinoma</tissue>
    </source>
</reference>
<reference evidence="16" key="6">
    <citation type="submission" date="1999-11" db="EMBL/GenBank/DDBJ databases">
        <authorList>
            <person name="Kim J.-R."/>
            <person name="Lee Y.H."/>
            <person name="Lee S.-R."/>
            <person name="Kim B.H."/>
            <person name="Rhee S.G."/>
            <person name="Kim J.H."/>
        </authorList>
    </citation>
    <scope>NUCLEOTIDE SEQUENCE (ISOFORM 1)</scope>
    <scope>VARIANTS SER-66 AND THR-370</scope>
</reference>
<reference key="7">
    <citation type="journal article" date="1999" name="Nature">
        <title>The DNA sequence of human chromosome 22.</title>
        <authorList>
            <person name="Dunham I."/>
            <person name="Hunt A.R."/>
            <person name="Collins J.E."/>
            <person name="Bruskiewich R."/>
            <person name="Beare D.M."/>
            <person name="Clamp M."/>
            <person name="Smink L.J."/>
            <person name="Ainscough R."/>
            <person name="Almeida J.P."/>
            <person name="Babbage A.K."/>
            <person name="Bagguley C."/>
            <person name="Bailey J."/>
            <person name="Barlow K.F."/>
            <person name="Bates K.N."/>
            <person name="Beasley O.P."/>
            <person name="Bird C.P."/>
            <person name="Blakey S.E."/>
            <person name="Bridgeman A.M."/>
            <person name="Buck D."/>
            <person name="Burgess J."/>
            <person name="Burrill W.D."/>
            <person name="Burton J."/>
            <person name="Carder C."/>
            <person name="Carter N.P."/>
            <person name="Chen Y."/>
            <person name="Clark G."/>
            <person name="Clegg S.M."/>
            <person name="Cobley V.E."/>
            <person name="Cole C.G."/>
            <person name="Collier R.E."/>
            <person name="Connor R."/>
            <person name="Conroy D."/>
            <person name="Corby N.R."/>
            <person name="Coville G.J."/>
            <person name="Cox A.V."/>
            <person name="Davis J."/>
            <person name="Dawson E."/>
            <person name="Dhami P.D."/>
            <person name="Dockree C."/>
            <person name="Dodsworth S.J."/>
            <person name="Durbin R.M."/>
            <person name="Ellington A.G."/>
            <person name="Evans K.L."/>
            <person name="Fey J.M."/>
            <person name="Fleming K."/>
            <person name="French L."/>
            <person name="Garner A.A."/>
            <person name="Gilbert J.G.R."/>
            <person name="Goward M.E."/>
            <person name="Grafham D.V."/>
            <person name="Griffiths M.N.D."/>
            <person name="Hall C."/>
            <person name="Hall R.E."/>
            <person name="Hall-Tamlyn G."/>
            <person name="Heathcott R.W."/>
            <person name="Ho S."/>
            <person name="Holmes S."/>
            <person name="Hunt S.E."/>
            <person name="Jones M.C."/>
            <person name="Kershaw J."/>
            <person name="Kimberley A.M."/>
            <person name="King A."/>
            <person name="Laird G.K."/>
            <person name="Langford C.F."/>
            <person name="Leversha M.A."/>
            <person name="Lloyd C."/>
            <person name="Lloyd D.M."/>
            <person name="Martyn I.D."/>
            <person name="Mashreghi-Mohammadi M."/>
            <person name="Matthews L.H."/>
            <person name="Mccann O.T."/>
            <person name="Mcclay J."/>
            <person name="Mclaren S."/>
            <person name="McMurray A.A."/>
            <person name="Milne S.A."/>
            <person name="Mortimore B.J."/>
            <person name="Odell C.N."/>
            <person name="Pavitt R."/>
            <person name="Pearce A.V."/>
            <person name="Pearson D."/>
            <person name="Phillimore B.J.C.T."/>
            <person name="Phillips S.H."/>
            <person name="Plumb R.W."/>
            <person name="Ramsay H."/>
            <person name="Ramsey Y."/>
            <person name="Rogers L."/>
            <person name="Ross M.T."/>
            <person name="Scott C.E."/>
            <person name="Sehra H.K."/>
            <person name="Skuce C.D."/>
            <person name="Smalley S."/>
            <person name="Smith M.L."/>
            <person name="Soderlund C."/>
            <person name="Spragon L."/>
            <person name="Steward C.A."/>
            <person name="Sulston J.E."/>
            <person name="Swann R.M."/>
            <person name="Vaudin M."/>
            <person name="Wall M."/>
            <person name="Wallis J.M."/>
            <person name="Whiteley M.N."/>
            <person name="Willey D.L."/>
            <person name="Williams L."/>
            <person name="Williams S.A."/>
            <person name="Williamson H."/>
            <person name="Wilmer T.E."/>
            <person name="Wilming L."/>
            <person name="Wright C.L."/>
            <person name="Hubbard T."/>
            <person name="Bentley D.R."/>
            <person name="Beck S."/>
            <person name="Rogers J."/>
            <person name="Shimizu N."/>
            <person name="Minoshima S."/>
            <person name="Kawasaki K."/>
            <person name="Sasaki T."/>
            <person name="Asakawa S."/>
            <person name="Kudoh J."/>
            <person name="Shintani A."/>
            <person name="Shibuya K."/>
            <person name="Yoshizaki Y."/>
            <person name="Aoki N."/>
            <person name="Mitsuyama S."/>
            <person name="Roe B.A."/>
            <person name="Chen F."/>
            <person name="Chu L."/>
            <person name="Crabtree J."/>
            <person name="Deschamps S."/>
            <person name="Do A."/>
            <person name="Do T."/>
            <person name="Dorman A."/>
            <person name="Fang F."/>
            <person name="Fu Y."/>
            <person name="Hu P."/>
            <person name="Hua A."/>
            <person name="Kenton S."/>
            <person name="Lai H."/>
            <person name="Lao H.I."/>
            <person name="Lewis J."/>
            <person name="Lewis S."/>
            <person name="Lin S.-P."/>
            <person name="Loh P."/>
            <person name="Malaj E."/>
            <person name="Nguyen T."/>
            <person name="Pan H."/>
            <person name="Phan S."/>
            <person name="Qi S."/>
            <person name="Qian Y."/>
            <person name="Ray L."/>
            <person name="Ren Q."/>
            <person name="Shaull S."/>
            <person name="Sloan D."/>
            <person name="Song L."/>
            <person name="Wang Q."/>
            <person name="Wang Y."/>
            <person name="Wang Z."/>
            <person name="White J."/>
            <person name="Willingham D."/>
            <person name="Wu H."/>
            <person name="Yao Z."/>
            <person name="Zhan M."/>
            <person name="Zhang G."/>
            <person name="Chissoe S."/>
            <person name="Murray J."/>
            <person name="Miller N."/>
            <person name="Minx P."/>
            <person name="Fulton R."/>
            <person name="Johnson D."/>
            <person name="Bemis G."/>
            <person name="Bentley D."/>
            <person name="Bradshaw H."/>
            <person name="Bourne S."/>
            <person name="Cordes M."/>
            <person name="Du Z."/>
            <person name="Fulton L."/>
            <person name="Goela D."/>
            <person name="Graves T."/>
            <person name="Hawkins J."/>
            <person name="Hinds K."/>
            <person name="Kemp K."/>
            <person name="Latreille P."/>
            <person name="Layman D."/>
            <person name="Ozersky P."/>
            <person name="Rohlfing T."/>
            <person name="Scheet P."/>
            <person name="Walker C."/>
            <person name="Wamsley A."/>
            <person name="Wohldmann P."/>
            <person name="Pepin K."/>
            <person name="Nelson J."/>
            <person name="Korf I."/>
            <person name="Bedell J.A."/>
            <person name="Hillier L.W."/>
            <person name="Mardis E."/>
            <person name="Waterston R."/>
            <person name="Wilson R."/>
            <person name="Emanuel B.S."/>
            <person name="Shaikh T."/>
            <person name="Kurahashi H."/>
            <person name="Saitta S."/>
            <person name="Budarf M.L."/>
            <person name="McDermid H.E."/>
            <person name="Johnson A."/>
            <person name="Wong A.C.C."/>
            <person name="Morrow B.E."/>
            <person name="Edelmann L."/>
            <person name="Kim U.J."/>
            <person name="Shizuya H."/>
            <person name="Simon M.I."/>
            <person name="Dumanski J.P."/>
            <person name="Peyrard M."/>
            <person name="Kedra D."/>
            <person name="Seroussi E."/>
            <person name="Fransson I."/>
            <person name="Tapia I."/>
            <person name="Bruder C.E."/>
            <person name="O'Brien K.P."/>
            <person name="Wilkinson P."/>
            <person name="Bodenteich A."/>
            <person name="Hartman K."/>
            <person name="Hu X."/>
            <person name="Khan A.S."/>
            <person name="Lane L."/>
            <person name="Tilahun Y."/>
            <person name="Wright H."/>
        </authorList>
    </citation>
    <scope>NUCLEOTIDE SEQUENCE [LARGE SCALE GENOMIC DNA]</scope>
</reference>
<reference key="8">
    <citation type="journal article" date="2004" name="Genome Res.">
        <title>The status, quality, and expansion of the NIH full-length cDNA project: the Mammalian Gene Collection (MGC).</title>
        <authorList>
            <consortium name="The MGC Project Team"/>
        </authorList>
    </citation>
    <scope>NUCLEOTIDE SEQUENCE [LARGE SCALE MRNA] OF 40-524</scope>
    <scope>VARIANT SER-66</scope>
    <source>
        <tissue>Skin</tissue>
    </source>
</reference>
<reference key="9">
    <citation type="journal article" date="2001" name="J. Biol. Chem.">
        <title>Heterogeneity within animal thioredoxin reductases: evidence for alternative first exon splicing.</title>
        <authorList>
            <person name="Sun Q.-A."/>
            <person name="Zappacosta F."/>
            <person name="Factor V.M."/>
            <person name="Wirth P.J."/>
            <person name="Hatfield D.L."/>
            <person name="Gladyshev V.N."/>
        </authorList>
    </citation>
    <scope>ALTERNATIVE SPLICING</scope>
</reference>
<reference key="10">
    <citation type="journal article" date="2011" name="BMC Syst. Biol.">
        <title>Initial characterization of the human central proteome.</title>
        <authorList>
            <person name="Burkard T.R."/>
            <person name="Planyavsky M."/>
            <person name="Kaupe I."/>
            <person name="Breitwieser F.P."/>
            <person name="Buerckstuemmer T."/>
            <person name="Bennett K.L."/>
            <person name="Superti-Furga G."/>
            <person name="Colinge J."/>
        </authorList>
    </citation>
    <scope>IDENTIFICATION BY MASS SPECTROMETRY [LARGE SCALE ANALYSIS]</scope>
</reference>
<reference key="11">
    <citation type="journal article" date="2014" name="J. Proteomics">
        <title>An enzyme assisted RP-RPLC approach for in-depth analysis of human liver phosphoproteome.</title>
        <authorList>
            <person name="Bian Y."/>
            <person name="Song C."/>
            <person name="Cheng K."/>
            <person name="Dong M."/>
            <person name="Wang F."/>
            <person name="Huang J."/>
            <person name="Sun D."/>
            <person name="Wang L."/>
            <person name="Ye M."/>
            <person name="Zou H."/>
        </authorList>
    </citation>
    <scope>IDENTIFICATION BY MASS SPECTROMETRY [LARGE SCALE ANALYSIS]</scope>
    <source>
        <tissue>Liver</tissue>
    </source>
</reference>
<reference key="12">
    <citation type="journal article" date="2015" name="Proteomics">
        <title>N-terminome analysis of the human mitochondrial proteome.</title>
        <authorList>
            <person name="Vaca Jacome A.S."/>
            <person name="Rabilloud T."/>
            <person name="Schaeffer-Reiss C."/>
            <person name="Rompais M."/>
            <person name="Ayoub D."/>
            <person name="Lane L."/>
            <person name="Bairoch A."/>
            <person name="Van Dorsselaer A."/>
            <person name="Carapito C."/>
        </authorList>
    </citation>
    <scope>IDENTIFICATION BY MASS SPECTROMETRY [LARGE SCALE ANALYSIS]</scope>
</reference>
<reference key="13">
    <citation type="journal article" date="2014" name="J. Clin. Endocrinol. Metab.">
        <title>Thioredoxin Reductase 2 (TXNRD2) mutation associated with familial glucocorticoid deficiency (FGD).</title>
        <authorList>
            <person name="Prasad R."/>
            <person name="Chan L.F."/>
            <person name="Hughes C.R."/>
            <person name="Kaski J.P."/>
            <person name="Kowalczyk J.C."/>
            <person name="Savage M.O."/>
            <person name="Peters C.J."/>
            <person name="Nathwani N."/>
            <person name="Clark A.J."/>
            <person name="Storr H.L."/>
            <person name="Metherell L.A."/>
        </authorList>
    </citation>
    <scope>FUNCTION</scope>
    <scope>TISSUE SPECIFICITY</scope>
    <scope>INVOLVEMENT IN GCCD5</scope>
    <scope>VARIANT GCCD5 447-TYR--GLY-524 DEL</scope>
    <scope>CHARACTERIZATION OF VARIANT GCCD5 447-TYR--GLY-524 DEL</scope>
    <scope>VARIANTS SER-66; ARG-299 AND THR-370</scope>
</reference>
<keyword id="KW-0025">Alternative splicing</keyword>
<keyword id="KW-0225">Disease variant</keyword>
<keyword id="KW-1015">Disulfide bond</keyword>
<keyword id="KW-0274">FAD</keyword>
<keyword id="KW-0285">Flavoprotein</keyword>
<keyword id="KW-0496">Mitochondrion</keyword>
<keyword id="KW-0521">NADP</keyword>
<keyword id="KW-0560">Oxidoreductase</keyword>
<keyword id="KW-1267">Proteomics identification</keyword>
<keyword id="KW-0676">Redox-active center</keyword>
<keyword id="KW-1185">Reference proteome</keyword>
<keyword id="KW-0712">Selenocysteine</keyword>
<keyword id="KW-0809">Transit peptide</keyword>
<organism evidence="17">
    <name type="scientific">Homo sapiens</name>
    <name type="common">Human</name>
    <dbReference type="NCBI Taxonomy" id="9606"/>
    <lineage>
        <taxon>Eukaryota</taxon>
        <taxon>Metazoa</taxon>
        <taxon>Chordata</taxon>
        <taxon>Craniata</taxon>
        <taxon>Vertebrata</taxon>
        <taxon>Euteleostomi</taxon>
        <taxon>Mammalia</taxon>
        <taxon>Eutheria</taxon>
        <taxon>Euarchontoglires</taxon>
        <taxon>Primates</taxon>
        <taxon>Haplorrhini</taxon>
        <taxon>Catarrhini</taxon>
        <taxon>Hominidae</taxon>
        <taxon>Homo</taxon>
    </lineage>
</organism>
<protein>
    <recommendedName>
        <fullName evidence="16">Thioredoxin reductase 2, mitochondrial</fullName>
        <ecNumber evidence="4 5">1.8.1.9</ecNumber>
    </recommendedName>
    <alternativeName>
        <fullName>Selenoprotein Z</fullName>
        <shortName>SelZ</shortName>
    </alternativeName>
    <alternativeName>
        <fullName>TR-beta</fullName>
    </alternativeName>
    <alternativeName>
        <fullName>Thioredoxin reductase TR3</fullName>
    </alternativeName>
</protein>
<feature type="transit peptide" description="Mitochondrion" evidence="6">
    <location>
        <begin position="1"/>
        <end position="36"/>
    </location>
</feature>
<feature type="chain" id="PRO_0000030288" description="Thioredoxin reductase 2, mitochondrial">
    <location>
        <begin position="37"/>
        <end position="524"/>
    </location>
</feature>
<feature type="active site" description="Proton acceptor" evidence="1">
    <location>
        <position position="497"/>
    </location>
</feature>
<feature type="binding site" evidence="1">
    <location>
        <begin position="41"/>
        <end position="70"/>
    </location>
    <ligand>
        <name>FAD</name>
        <dbReference type="ChEBI" id="CHEBI:57692"/>
    </ligand>
</feature>
<feature type="non-standard amino acid" description="Selenocysteine">
    <location>
        <position position="523"/>
    </location>
</feature>
<feature type="modified residue" description="N6-succinyllysine" evidence="3">
    <location>
        <position position="175"/>
    </location>
</feature>
<feature type="modified residue" description="N6-succinyllysine" evidence="3">
    <location>
        <position position="329"/>
    </location>
</feature>
<feature type="disulfide bond" description="Redox-active" evidence="1">
    <location>
        <begin position="86"/>
        <end position="91"/>
    </location>
</feature>
<feature type="cross-link" description="Cysteinyl-selenocysteine (Cys-Sec)" evidence="1">
    <location>
        <begin position="522"/>
        <end position="523"/>
    </location>
</feature>
<feature type="splice variant" id="VSP_008306" description="In isoform 4." evidence="15">
    <location>
        <begin position="1"/>
        <end position="247"/>
    </location>
</feature>
<feature type="splice variant" id="VSP_008305" description="In isoform 3." evidence="15">
    <location>
        <begin position="1"/>
        <end position="96"/>
    </location>
</feature>
<feature type="splice variant" id="VSP_008304" description="In isoform 2." evidence="16">
    <original>MAAMAVALRGLGGRFRWRTQAVAGGVRGAA</original>
    <variation>MEDQ</variation>
    <location>
        <begin position="1"/>
        <end position="30"/>
    </location>
</feature>
<feature type="sequence variant" id="VAR_051777" description="In dbSNP:rs45593642.">
    <original>R</original>
    <variation>L</variation>
    <location>
        <position position="14"/>
    </location>
</feature>
<feature type="sequence variant" id="VAR_051778" description="In dbSNP:rs5748469." evidence="10 11 12 14">
    <original>A</original>
    <variation>S</variation>
    <location>
        <position position="66"/>
    </location>
</feature>
<feature type="sequence variant" id="VAR_051779" description="In dbSNP:rs5992495." evidence="11">
    <original>S</original>
    <variation>R</variation>
    <location>
        <position position="299"/>
    </location>
</feature>
<feature type="sequence variant" id="VAR_051780" description="In dbSNP:rs1139793." evidence="9 11 13 14">
    <original>I</original>
    <variation>T</variation>
    <location>
        <position position="370"/>
    </location>
</feature>
<feature type="sequence variant" id="VAR_080529" description="In GCCD5; the mutant protein is undetectable in patient cells." evidence="11">
    <location>
        <begin position="447"/>
        <end position="524"/>
    </location>
</feature>
<feature type="sequence conflict" description="In Ref. 6; AAG47635." evidence="16" ref="6">
    <location>
        <position position="33"/>
    </location>
</feature>
<feature type="sequence conflict" description="In Ref. 6; AAG47635." evidence="16" ref="6">
    <original>R</original>
    <variation>K</variation>
    <location>
        <position position="285"/>
    </location>
</feature>
<proteinExistence type="evidence at protein level"/>
<evidence type="ECO:0000250" key="1"/>
<evidence type="ECO:0000250" key="2">
    <source>
        <dbReference type="UniProtKB" id="P38816"/>
    </source>
</evidence>
<evidence type="ECO:0000250" key="3">
    <source>
        <dbReference type="UniProtKB" id="Q9JLT4"/>
    </source>
</evidence>
<evidence type="ECO:0000250" key="4">
    <source>
        <dbReference type="UniProtKB" id="Q9N2I8"/>
    </source>
</evidence>
<evidence type="ECO:0000250" key="5">
    <source>
        <dbReference type="UniProtKB" id="Q9Z0J5"/>
    </source>
</evidence>
<evidence type="ECO:0000255" key="6"/>
<evidence type="ECO:0000255" key="7">
    <source>
        <dbReference type="RuleBase" id="RU000402"/>
    </source>
</evidence>
<evidence type="ECO:0000269" key="8">
    <source>
    </source>
</evidence>
<evidence type="ECO:0000269" key="9">
    <source>
    </source>
</evidence>
<evidence type="ECO:0000269" key="10">
    <source>
    </source>
</evidence>
<evidence type="ECO:0000269" key="11">
    <source>
    </source>
</evidence>
<evidence type="ECO:0000269" key="12">
    <source>
    </source>
</evidence>
<evidence type="ECO:0000269" key="13">
    <source ref="4"/>
</evidence>
<evidence type="ECO:0000269" key="14">
    <source ref="6"/>
</evidence>
<evidence type="ECO:0000303" key="15">
    <source>
    </source>
</evidence>
<evidence type="ECO:0000305" key="16"/>
<evidence type="ECO:0000312" key="17">
    <source>
        <dbReference type="EMBL" id="AAD51324.1"/>
    </source>
</evidence>
<evidence type="ECO:0000312" key="18">
    <source>
        <dbReference type="HGNC" id="HGNC:18155"/>
    </source>
</evidence>
<gene>
    <name evidence="18" type="primary">TXNRD2</name>
    <name type="synonym">KIAA1652</name>
    <name type="synonym">TRXR2</name>
</gene>